<comment type="function">
    <text evidence="1">Catalyzes the epimerization of trans-4-hydroxy-L-proline (t4LHyp) to cis-4-hydroxy-D-proline (c4DHyp). May be involved in a degradation pathway of t4LHyp. Can also catalyze the epimerization of trans-3-hydroxy-L-proline (t3LHyp) to cis-3-hydroxy-D-proline (c3DHyp) in vitro. Displays no proline racemase activity.</text>
</comment>
<comment type="catalytic activity">
    <reaction evidence="1">
        <text>trans-4-hydroxy-L-proline = cis-4-hydroxy-D-proline</text>
        <dbReference type="Rhea" id="RHEA:21152"/>
        <dbReference type="ChEBI" id="CHEBI:57690"/>
        <dbReference type="ChEBI" id="CHEBI:58375"/>
        <dbReference type="EC" id="5.1.1.8"/>
    </reaction>
</comment>
<comment type="biophysicochemical properties">
    <kinetics>
        <KM evidence="1">5.6 mM for trans-4-hydroxy-L-proline</KM>
        <KM evidence="1">4.8 mM for trans-3-hydroxy-L-proline</KM>
        <text evidence="1">kcat is 1.3 sec(-1) for t4LHyp epimerization. kcat is 0.75 sec(-1) for t3LHyp epimerization.</text>
    </kinetics>
</comment>
<comment type="similarity">
    <text evidence="3">Belongs to the proline racemase family.</text>
</comment>
<dbReference type="EC" id="5.1.1.8" evidence="1"/>
<dbReference type="EMBL" id="CP000633">
    <property type="protein sequence ID" value="ACM35366.1"/>
    <property type="molecule type" value="Genomic_DNA"/>
</dbReference>
<dbReference type="RefSeq" id="WP_015914794.1">
    <property type="nucleotide sequence ID" value="NC_011989.1"/>
</dbReference>
<dbReference type="PDB" id="4LB0">
    <property type="method" value="X-ray"/>
    <property type="resolution" value="1.70 A"/>
    <property type="chains" value="A/B=1-347"/>
</dbReference>
<dbReference type="PDBsum" id="4LB0"/>
<dbReference type="SMR" id="B9JQV3"/>
<dbReference type="STRING" id="311402.Avi_0518"/>
<dbReference type="KEGG" id="avi:Avi_0518"/>
<dbReference type="eggNOG" id="COG3938">
    <property type="taxonomic scope" value="Bacteria"/>
</dbReference>
<dbReference type="HOGENOM" id="CLU_036729_2_0_5"/>
<dbReference type="SABIO-RK" id="B9JQV3"/>
<dbReference type="EvolutionaryTrace" id="B9JQV3"/>
<dbReference type="Proteomes" id="UP000001596">
    <property type="component" value="Chromosome 1"/>
</dbReference>
<dbReference type="GO" id="GO:0047580">
    <property type="term" value="F:4-hydroxyproline epimerase activity"/>
    <property type="evidence" value="ECO:0007669"/>
    <property type="project" value="UniProtKB-EC"/>
</dbReference>
<dbReference type="GO" id="GO:0050346">
    <property type="term" value="F:trans-L-3-hydroxyproline dehydratase activity"/>
    <property type="evidence" value="ECO:0007669"/>
    <property type="project" value="UniProtKB-ARBA"/>
</dbReference>
<dbReference type="FunFam" id="3.10.310.10:FF:000005">
    <property type="entry name" value="Proline racemase"/>
    <property type="match status" value="1"/>
</dbReference>
<dbReference type="Gene3D" id="3.10.310.10">
    <property type="entry name" value="Diaminopimelate Epimerase, Chain A, domain 1"/>
    <property type="match status" value="2"/>
</dbReference>
<dbReference type="InterPro" id="IPR008794">
    <property type="entry name" value="Pro_racemase_fam"/>
</dbReference>
<dbReference type="PANTHER" id="PTHR33442:SF5">
    <property type="entry name" value="BIFUNCTIONAL TRANS-3-HYDROXY-L-PROLINE DEHYDRATASE_2-EPIMERASE"/>
    <property type="match status" value="1"/>
</dbReference>
<dbReference type="PANTHER" id="PTHR33442">
    <property type="entry name" value="TRANS-3-HYDROXY-L-PROLINE DEHYDRATASE"/>
    <property type="match status" value="1"/>
</dbReference>
<dbReference type="Pfam" id="PF05544">
    <property type="entry name" value="Pro_racemase"/>
    <property type="match status" value="1"/>
</dbReference>
<dbReference type="PIRSF" id="PIRSF029792">
    <property type="entry name" value="Pro_racemase"/>
    <property type="match status" value="1"/>
</dbReference>
<dbReference type="SFLD" id="SFLDS00028">
    <property type="entry name" value="Proline_Racemase"/>
    <property type="match status" value="1"/>
</dbReference>
<dbReference type="SUPFAM" id="SSF54506">
    <property type="entry name" value="Diaminopimelate epimerase-like"/>
    <property type="match status" value="1"/>
</dbReference>
<name>4HYPE_ALLAM</name>
<organism>
    <name type="scientific">Allorhizobium ampelinum (strain ATCC BAA-846 / DSM 112012 / S4)</name>
    <name type="common">Agrobacterium vitis (strain S4)</name>
    <dbReference type="NCBI Taxonomy" id="311402"/>
    <lineage>
        <taxon>Bacteria</taxon>
        <taxon>Pseudomonadati</taxon>
        <taxon>Pseudomonadota</taxon>
        <taxon>Alphaproteobacteria</taxon>
        <taxon>Hyphomicrobiales</taxon>
        <taxon>Rhizobiaceae</taxon>
        <taxon>Rhizobium/Agrobacterium group</taxon>
        <taxon>Allorhizobium</taxon>
        <taxon>Allorhizobium ampelinum</taxon>
    </lineage>
</organism>
<accession>B9JQV3</accession>
<sequence>MRWKRMMQLLDVHCEGEIGKVAIGGVPKIPGDTVADQLHWLNTDPKGRELRHFLVLEPRGAPIGSVNLLLPAKDSRADAAFIILQPDQAHASSGSNSICVTTALLESGMIEMQEPETVVMLETAAGLVKAVAQCRDGHCDSVTLTMVPSFVHELDAQIATESWGEIRFDLAYGGVFYALVDVRQLGLTIEPGNARRLVEAGMLLKGEINQRIQVVHPDIPAISGVAYVMFRDEDPDGAVRTCTTMWPGRVDRSPCGTGNSANLATLHARGRVKPGDSFLSRSIIGSQFTVGLQGLTTVAGRSAVIPTITGRGFTYGIHQVALDAFDPLGGGFVLTDVWGAAAETIKI</sequence>
<reference key="1">
    <citation type="journal article" date="2009" name="J. Bacteriol.">
        <title>Genome sequences of three Agrobacterium biovars help elucidate the evolution of multichromosome genomes in bacteria.</title>
        <authorList>
            <person name="Slater S.C."/>
            <person name="Goldman B.S."/>
            <person name="Goodner B."/>
            <person name="Setubal J.C."/>
            <person name="Farrand S.K."/>
            <person name="Nester E.W."/>
            <person name="Burr T.J."/>
            <person name="Banta L."/>
            <person name="Dickerman A.W."/>
            <person name="Paulsen I."/>
            <person name="Otten L."/>
            <person name="Suen G."/>
            <person name="Welch R."/>
            <person name="Almeida N.F."/>
            <person name="Arnold F."/>
            <person name="Burton O.T."/>
            <person name="Du Z."/>
            <person name="Ewing A."/>
            <person name="Godsy E."/>
            <person name="Heisel S."/>
            <person name="Houmiel K.L."/>
            <person name="Jhaveri J."/>
            <person name="Lu J."/>
            <person name="Miller N.M."/>
            <person name="Norton S."/>
            <person name="Chen Q."/>
            <person name="Phoolcharoen W."/>
            <person name="Ohlin V."/>
            <person name="Ondrusek D."/>
            <person name="Pride N."/>
            <person name="Stricklin S.L."/>
            <person name="Sun J."/>
            <person name="Wheeler C."/>
            <person name="Wilson L."/>
            <person name="Zhu H."/>
            <person name="Wood D.W."/>
        </authorList>
    </citation>
    <scope>NUCLEOTIDE SEQUENCE [LARGE SCALE GENOMIC DNA]</scope>
    <source>
        <strain>ATCC BAA-846 / DSM 112012 / S4</strain>
    </source>
</reference>
<reference key="2">
    <citation type="journal article" date="2014" name="Elife">
        <title>Prediction and characterization of enzymatic activities guided by sequence similarity and genome neighborhood networks.</title>
        <authorList>
            <person name="Zhao S."/>
            <person name="Sakai A."/>
            <person name="Zhang X."/>
            <person name="Vetting M.W."/>
            <person name="Kumar R."/>
            <person name="Hillerich B."/>
            <person name="San Francisco B."/>
            <person name="Solbiati J."/>
            <person name="Steves A."/>
            <person name="Brown S."/>
            <person name="Akiva E."/>
            <person name="Barber A."/>
            <person name="Seidel R.D."/>
            <person name="Babbitt P.C."/>
            <person name="Almo S.C."/>
            <person name="Gerlt J.A."/>
            <person name="Jacobson M.P."/>
        </authorList>
    </citation>
    <scope>X-RAY CRYSTALLOGRAPHY (1.70 ANGSTROMS) IN COMPLEX WITH TRANS-4-HYDROXY-L-PROLINE</scope>
    <scope>FUNCTION</scope>
    <scope>CATALYTIC ACTIVITY</scope>
    <scope>BIOPHYSICOCHEMICAL PROPERTIES</scope>
    <scope>ACTIVE SITE</scope>
    <source>
        <strain>ATCC BAA-846 / DSM 112012 / S4</strain>
    </source>
</reference>
<feature type="chain" id="PRO_0000432249" description="4-hydroxyproline 2-epimerase">
    <location>
        <begin position="1"/>
        <end position="347"/>
    </location>
</feature>
<feature type="active site" description="Proton acceptor" evidence="4">
    <location>
        <position position="93"/>
    </location>
</feature>
<feature type="active site" description="Proton donor" evidence="4">
    <location>
        <position position="255"/>
    </location>
</feature>
<feature type="binding site" evidence="1">
    <location>
        <position position="85"/>
    </location>
    <ligand>
        <name>substrate</name>
    </ligand>
</feature>
<feature type="binding site" evidence="1">
    <location>
        <begin position="94"/>
        <end position="95"/>
    </location>
    <ligand>
        <name>substrate</name>
    </ligand>
</feature>
<feature type="binding site" evidence="1">
    <location>
        <position position="251"/>
    </location>
    <ligand>
        <name>substrate</name>
    </ligand>
</feature>
<feature type="binding site" evidence="1">
    <location>
        <begin position="256"/>
        <end position="257"/>
    </location>
    <ligand>
        <name>substrate</name>
    </ligand>
</feature>
<feature type="strand" evidence="6">
    <location>
        <begin position="3"/>
        <end position="14"/>
    </location>
</feature>
<feature type="strand" evidence="6">
    <location>
        <begin position="17"/>
        <end position="25"/>
    </location>
</feature>
<feature type="helix" evidence="6">
    <location>
        <begin position="34"/>
        <end position="43"/>
    </location>
</feature>
<feature type="helix" evidence="6">
    <location>
        <begin position="45"/>
        <end position="55"/>
    </location>
</feature>
<feature type="strand" evidence="6">
    <location>
        <begin position="65"/>
        <end position="70"/>
    </location>
</feature>
<feature type="strand" evidence="6">
    <location>
        <begin position="78"/>
        <end position="84"/>
    </location>
</feature>
<feature type="strand" evidence="6">
    <location>
        <begin position="89"/>
        <end position="91"/>
    </location>
</feature>
<feature type="helix" evidence="6">
    <location>
        <begin position="94"/>
        <end position="106"/>
    </location>
</feature>
<feature type="strand" evidence="6">
    <location>
        <begin position="114"/>
        <end position="123"/>
    </location>
</feature>
<feature type="strand" evidence="6">
    <location>
        <begin position="126"/>
        <end position="135"/>
    </location>
</feature>
<feature type="strand" evidence="6">
    <location>
        <begin position="138"/>
        <end position="145"/>
    </location>
</feature>
<feature type="strand" evidence="6">
    <location>
        <begin position="149"/>
        <end position="160"/>
    </location>
</feature>
<feature type="turn" evidence="6">
    <location>
        <begin position="161"/>
        <end position="163"/>
    </location>
</feature>
<feature type="strand" evidence="6">
    <location>
        <begin position="164"/>
        <end position="181"/>
    </location>
</feature>
<feature type="helix" evidence="6">
    <location>
        <begin position="182"/>
        <end position="185"/>
    </location>
</feature>
<feature type="helix" evidence="6">
    <location>
        <begin position="191"/>
        <end position="193"/>
    </location>
</feature>
<feature type="helix" evidence="6">
    <location>
        <begin position="194"/>
        <end position="211"/>
    </location>
</feature>
<feature type="strand" evidence="6">
    <location>
        <begin position="223"/>
        <end position="233"/>
    </location>
</feature>
<feature type="strand" evidence="6">
    <location>
        <begin position="239"/>
        <end position="245"/>
    </location>
</feature>
<feature type="turn" evidence="6">
    <location>
        <begin position="246"/>
        <end position="248"/>
    </location>
</feature>
<feature type="helix" evidence="6">
    <location>
        <begin position="256"/>
        <end position="268"/>
    </location>
</feature>
<feature type="strand" evidence="6">
    <location>
        <begin position="277"/>
        <end position="281"/>
    </location>
</feature>
<feature type="strand" evidence="6">
    <location>
        <begin position="287"/>
        <end position="298"/>
    </location>
</feature>
<feature type="strand" evidence="6">
    <location>
        <begin position="301"/>
        <end position="310"/>
    </location>
</feature>
<feature type="strand" evidence="6">
    <location>
        <begin position="312"/>
        <end position="321"/>
    </location>
</feature>
<feature type="helix" evidence="6">
    <location>
        <begin position="335"/>
        <end position="338"/>
    </location>
</feature>
<feature type="helix" evidence="6">
    <location>
        <begin position="340"/>
        <end position="343"/>
    </location>
</feature>
<evidence type="ECO:0000269" key="1">
    <source>
    </source>
</evidence>
<evidence type="ECO:0000303" key="2">
    <source>
    </source>
</evidence>
<evidence type="ECO:0000305" key="3"/>
<evidence type="ECO:0000305" key="4">
    <source>
    </source>
</evidence>
<evidence type="ECO:0000312" key="5">
    <source>
        <dbReference type="EMBL" id="ACM35366.1"/>
    </source>
</evidence>
<evidence type="ECO:0007829" key="6">
    <source>
        <dbReference type="PDB" id="4LB0"/>
    </source>
</evidence>
<proteinExistence type="evidence at protein level"/>
<gene>
    <name evidence="5" type="ordered locus">Avi_0518</name>
</gene>
<protein>
    <recommendedName>
        <fullName evidence="2">4-hydroxyproline 2-epimerase</fullName>
        <shortName>4Hyp 2-epimerase</shortName>
        <shortName evidence="2">4HypE</shortName>
        <ecNumber evidence="1">5.1.1.8</ecNumber>
    </recommendedName>
</protein>
<keyword id="KW-0002">3D-structure</keyword>
<keyword id="KW-0413">Isomerase</keyword>
<keyword id="KW-1185">Reference proteome</keyword>